<proteinExistence type="inferred from homology"/>
<organism>
    <name type="scientific">Salmonella typhimurium (strain LT2 / SGSC1412 / ATCC 700720)</name>
    <dbReference type="NCBI Taxonomy" id="99287"/>
    <lineage>
        <taxon>Bacteria</taxon>
        <taxon>Pseudomonadati</taxon>
        <taxon>Pseudomonadota</taxon>
        <taxon>Gammaproteobacteria</taxon>
        <taxon>Enterobacterales</taxon>
        <taxon>Enterobacteriaceae</taxon>
        <taxon>Salmonella</taxon>
    </lineage>
</organism>
<feature type="chain" id="PRO_0000181493" description="Large ribosomal subunit protein bL25">
    <location>
        <begin position="1"/>
        <end position="94"/>
    </location>
</feature>
<gene>
    <name evidence="1" type="primary">rplY</name>
    <name type="ordered locus">STM2224</name>
</gene>
<sequence length="94" mass="10541">MFTINAEVRKEQGKGASRRLRAANKFPAIIYGGSEAPIAIELDHDQVMNMQAKAEFYSEVLTLVVDGKEVKVKAQAVQRHAYKPKLTHIDFVRA</sequence>
<name>RL25_SALTY</name>
<reference key="1">
    <citation type="journal article" date="2001" name="Nature">
        <title>Complete genome sequence of Salmonella enterica serovar Typhimurium LT2.</title>
        <authorList>
            <person name="McClelland M."/>
            <person name="Sanderson K.E."/>
            <person name="Spieth J."/>
            <person name="Clifton S.W."/>
            <person name="Latreille P."/>
            <person name="Courtney L."/>
            <person name="Porwollik S."/>
            <person name="Ali J."/>
            <person name="Dante M."/>
            <person name="Du F."/>
            <person name="Hou S."/>
            <person name="Layman D."/>
            <person name="Leonard S."/>
            <person name="Nguyen C."/>
            <person name="Scott K."/>
            <person name="Holmes A."/>
            <person name="Grewal N."/>
            <person name="Mulvaney E."/>
            <person name="Ryan E."/>
            <person name="Sun H."/>
            <person name="Florea L."/>
            <person name="Miller W."/>
            <person name="Stoneking T."/>
            <person name="Nhan M."/>
            <person name="Waterston R."/>
            <person name="Wilson R.K."/>
        </authorList>
    </citation>
    <scope>NUCLEOTIDE SEQUENCE [LARGE SCALE GENOMIC DNA]</scope>
    <source>
        <strain>LT2 / SGSC1412 / ATCC 700720</strain>
    </source>
</reference>
<dbReference type="EMBL" id="AE006468">
    <property type="protein sequence ID" value="AAL21127.1"/>
    <property type="molecule type" value="Genomic_DNA"/>
</dbReference>
<dbReference type="RefSeq" id="NP_461168.1">
    <property type="nucleotide sequence ID" value="NC_003197.2"/>
</dbReference>
<dbReference type="RefSeq" id="WP_000494192.1">
    <property type="nucleotide sequence ID" value="NC_003197.2"/>
</dbReference>
<dbReference type="SMR" id="Q7CQ71"/>
<dbReference type="STRING" id="99287.STM2224"/>
<dbReference type="PaxDb" id="99287-STM2224"/>
<dbReference type="GeneID" id="1253746"/>
<dbReference type="KEGG" id="stm:STM2224"/>
<dbReference type="PATRIC" id="fig|99287.12.peg.2356"/>
<dbReference type="HOGENOM" id="CLU_137946_0_0_6"/>
<dbReference type="OMA" id="DHDKVWN"/>
<dbReference type="PhylomeDB" id="Q7CQ71"/>
<dbReference type="BioCyc" id="SENT99287:STM2224-MONOMER"/>
<dbReference type="Proteomes" id="UP000001014">
    <property type="component" value="Chromosome"/>
</dbReference>
<dbReference type="GO" id="GO:0022625">
    <property type="term" value="C:cytosolic large ribosomal subunit"/>
    <property type="evidence" value="ECO:0000318"/>
    <property type="project" value="GO_Central"/>
</dbReference>
<dbReference type="GO" id="GO:0008097">
    <property type="term" value="F:5S rRNA binding"/>
    <property type="evidence" value="ECO:0000318"/>
    <property type="project" value="GO_Central"/>
</dbReference>
<dbReference type="GO" id="GO:0003735">
    <property type="term" value="F:structural constituent of ribosome"/>
    <property type="evidence" value="ECO:0007669"/>
    <property type="project" value="InterPro"/>
</dbReference>
<dbReference type="GO" id="GO:0006412">
    <property type="term" value="P:translation"/>
    <property type="evidence" value="ECO:0000318"/>
    <property type="project" value="GO_Central"/>
</dbReference>
<dbReference type="CDD" id="cd00495">
    <property type="entry name" value="Ribosomal_L25_TL5_CTC"/>
    <property type="match status" value="1"/>
</dbReference>
<dbReference type="FunFam" id="2.40.240.10:FF:000002">
    <property type="entry name" value="50S ribosomal protein L25"/>
    <property type="match status" value="1"/>
</dbReference>
<dbReference type="Gene3D" id="2.40.240.10">
    <property type="entry name" value="Ribosomal Protein L25, Chain P"/>
    <property type="match status" value="1"/>
</dbReference>
<dbReference type="HAMAP" id="MF_01336">
    <property type="entry name" value="Ribosomal_bL25"/>
    <property type="match status" value="1"/>
</dbReference>
<dbReference type="InterPro" id="IPR020056">
    <property type="entry name" value="Rbsml_bL25/Gln-tRNA_synth_N"/>
</dbReference>
<dbReference type="InterPro" id="IPR011035">
    <property type="entry name" value="Ribosomal_bL25/Gln-tRNA_synth"/>
</dbReference>
<dbReference type="InterPro" id="IPR020055">
    <property type="entry name" value="Ribosomal_bL25_short"/>
</dbReference>
<dbReference type="InterPro" id="IPR029751">
    <property type="entry name" value="Ribosomal_L25_dom"/>
</dbReference>
<dbReference type="InterPro" id="IPR020930">
    <property type="entry name" value="Ribosomal_uL5_bac-type"/>
</dbReference>
<dbReference type="NCBIfam" id="NF004612">
    <property type="entry name" value="PRK05943.1"/>
    <property type="match status" value="1"/>
</dbReference>
<dbReference type="PANTHER" id="PTHR33284">
    <property type="entry name" value="RIBOSOMAL PROTEIN L25/GLN-TRNA SYNTHETASE, ANTI-CODON-BINDING DOMAIN-CONTAINING PROTEIN"/>
    <property type="match status" value="1"/>
</dbReference>
<dbReference type="PANTHER" id="PTHR33284:SF1">
    <property type="entry name" value="RIBOSOMAL PROTEIN L25_GLN-TRNA SYNTHETASE, ANTI-CODON-BINDING DOMAIN-CONTAINING PROTEIN"/>
    <property type="match status" value="1"/>
</dbReference>
<dbReference type="Pfam" id="PF01386">
    <property type="entry name" value="Ribosomal_L25p"/>
    <property type="match status" value="1"/>
</dbReference>
<dbReference type="SUPFAM" id="SSF50715">
    <property type="entry name" value="Ribosomal protein L25-like"/>
    <property type="match status" value="1"/>
</dbReference>
<protein>
    <recommendedName>
        <fullName evidence="1">Large ribosomal subunit protein bL25</fullName>
    </recommendedName>
    <alternativeName>
        <fullName evidence="2">50S ribosomal protein L25</fullName>
    </alternativeName>
</protein>
<evidence type="ECO:0000255" key="1">
    <source>
        <dbReference type="HAMAP-Rule" id="MF_01336"/>
    </source>
</evidence>
<evidence type="ECO:0000305" key="2"/>
<comment type="function">
    <text evidence="1">This is one of the proteins that binds to the 5S RNA in the ribosome where it forms part of the central protuberance.</text>
</comment>
<comment type="subunit">
    <text evidence="1">Part of the 50S ribosomal subunit; part of the 5S rRNA/L5/L18/L25 subcomplex. Contacts the 5S rRNA. Binds to the 5S rRNA independently of L5 and L18.</text>
</comment>
<comment type="similarity">
    <text evidence="1">Belongs to the bacterial ribosomal protein bL25 family.</text>
</comment>
<keyword id="KW-1185">Reference proteome</keyword>
<keyword id="KW-0687">Ribonucleoprotein</keyword>
<keyword id="KW-0689">Ribosomal protein</keyword>
<keyword id="KW-0694">RNA-binding</keyword>
<keyword id="KW-0699">rRNA-binding</keyword>
<accession>Q7CQ71</accession>